<keyword id="KW-0963">Cytoplasm</keyword>
<keyword id="KW-0489">Methyltransferase</keyword>
<keyword id="KW-0698">rRNA processing</keyword>
<keyword id="KW-0949">S-adenosyl-L-methionine</keyword>
<keyword id="KW-0808">Transferase</keyword>
<sequence length="192" mass="21991">MYHLGDEYSQKAKREGYLARSVYKLIEINEKFSLFSSGNVLDIGASPGSFSQYAYKKLKRGVLVSVDINDISLRYVNNFYFIKGDIFSDDTASKINKFGPYSLVISDVAPKTTGNRLVDTSNSFNLNMRIIDLSFEVLLKKGNLLVKVFQGGDEMQIFKKFEKYFKFVKKIRPKAVRKNSFEIYFLGKSFGK</sequence>
<protein>
    <recommendedName>
        <fullName evidence="1">Ribosomal RNA large subunit methyltransferase E</fullName>
        <ecNumber evidence="1">2.1.1.166</ecNumber>
    </recommendedName>
    <alternativeName>
        <fullName evidence="1">23S rRNA Um2552 methyltransferase</fullName>
    </alternativeName>
    <alternativeName>
        <fullName evidence="1">rRNA (uridine-2'-O-)-methyltransferase</fullName>
    </alternativeName>
</protein>
<gene>
    <name evidence="1" type="primary">rlmE</name>
    <name evidence="1" type="synonym">ftsJ</name>
    <name evidence="1" type="synonym">rrmJ</name>
    <name type="ordered locus">BG0316</name>
</gene>
<proteinExistence type="inferred from homology"/>
<organism>
    <name type="scientific">Borrelia garinii subsp. bavariensis (strain ATCC BAA-2496 / DSM 23469 / PBi)</name>
    <name type="common">Borreliella bavariensis</name>
    <dbReference type="NCBI Taxonomy" id="290434"/>
    <lineage>
        <taxon>Bacteria</taxon>
        <taxon>Pseudomonadati</taxon>
        <taxon>Spirochaetota</taxon>
        <taxon>Spirochaetia</taxon>
        <taxon>Spirochaetales</taxon>
        <taxon>Borreliaceae</taxon>
        <taxon>Borreliella</taxon>
    </lineage>
</organism>
<evidence type="ECO:0000255" key="1">
    <source>
        <dbReference type="HAMAP-Rule" id="MF_01547"/>
    </source>
</evidence>
<comment type="function">
    <text evidence="1">Specifically methylates the uridine in position 2552 of 23S rRNA at the 2'-O position of the ribose in the fully assembled 50S ribosomal subunit.</text>
</comment>
<comment type="catalytic activity">
    <reaction evidence="1">
        <text>uridine(2552) in 23S rRNA + S-adenosyl-L-methionine = 2'-O-methyluridine(2552) in 23S rRNA + S-adenosyl-L-homocysteine + H(+)</text>
        <dbReference type="Rhea" id="RHEA:42720"/>
        <dbReference type="Rhea" id="RHEA-COMP:10202"/>
        <dbReference type="Rhea" id="RHEA-COMP:10203"/>
        <dbReference type="ChEBI" id="CHEBI:15378"/>
        <dbReference type="ChEBI" id="CHEBI:57856"/>
        <dbReference type="ChEBI" id="CHEBI:59789"/>
        <dbReference type="ChEBI" id="CHEBI:65315"/>
        <dbReference type="ChEBI" id="CHEBI:74478"/>
        <dbReference type="EC" id="2.1.1.166"/>
    </reaction>
</comment>
<comment type="subcellular location">
    <subcellularLocation>
        <location evidence="1">Cytoplasm</location>
    </subcellularLocation>
</comment>
<comment type="similarity">
    <text evidence="1">Belongs to the class I-like SAM-binding methyltransferase superfamily. RNA methyltransferase RlmE family.</text>
</comment>
<accession>Q661V2</accession>
<name>RLME_BORGP</name>
<dbReference type="EC" id="2.1.1.166" evidence="1"/>
<dbReference type="EMBL" id="CP000013">
    <property type="protein sequence ID" value="AAU07169.1"/>
    <property type="molecule type" value="Genomic_DNA"/>
</dbReference>
<dbReference type="RefSeq" id="WP_011193645.1">
    <property type="nucleotide sequence ID" value="NZ_CP028872.1"/>
</dbReference>
<dbReference type="SMR" id="Q661V2"/>
<dbReference type="GeneID" id="45161105"/>
<dbReference type="KEGG" id="bga:BG0316"/>
<dbReference type="eggNOG" id="COG0293">
    <property type="taxonomic scope" value="Bacteria"/>
</dbReference>
<dbReference type="HOGENOM" id="CLU_009422_4_4_12"/>
<dbReference type="OrthoDB" id="154490at2"/>
<dbReference type="Proteomes" id="UP000002276">
    <property type="component" value="Chromosome"/>
</dbReference>
<dbReference type="GO" id="GO:0005737">
    <property type="term" value="C:cytoplasm"/>
    <property type="evidence" value="ECO:0007669"/>
    <property type="project" value="UniProtKB-SubCell"/>
</dbReference>
<dbReference type="GO" id="GO:0008650">
    <property type="term" value="F:rRNA (uridine-2'-O-)-methyltransferase activity"/>
    <property type="evidence" value="ECO:0007669"/>
    <property type="project" value="UniProtKB-UniRule"/>
</dbReference>
<dbReference type="Gene3D" id="3.40.50.150">
    <property type="entry name" value="Vaccinia Virus protein VP39"/>
    <property type="match status" value="1"/>
</dbReference>
<dbReference type="HAMAP" id="MF_01547">
    <property type="entry name" value="RNA_methyltr_E"/>
    <property type="match status" value="1"/>
</dbReference>
<dbReference type="InterPro" id="IPR050082">
    <property type="entry name" value="RNA_methyltr_RlmE"/>
</dbReference>
<dbReference type="InterPro" id="IPR002877">
    <property type="entry name" value="RNA_MeTrfase_FtsJ_dom"/>
</dbReference>
<dbReference type="InterPro" id="IPR015507">
    <property type="entry name" value="rRNA-MeTfrase_E"/>
</dbReference>
<dbReference type="InterPro" id="IPR029063">
    <property type="entry name" value="SAM-dependent_MTases_sf"/>
</dbReference>
<dbReference type="PANTHER" id="PTHR10920">
    <property type="entry name" value="RIBOSOMAL RNA METHYLTRANSFERASE"/>
    <property type="match status" value="1"/>
</dbReference>
<dbReference type="PANTHER" id="PTHR10920:SF18">
    <property type="entry name" value="RRNA METHYLTRANSFERASE 2, MITOCHONDRIAL"/>
    <property type="match status" value="1"/>
</dbReference>
<dbReference type="Pfam" id="PF01728">
    <property type="entry name" value="FtsJ"/>
    <property type="match status" value="1"/>
</dbReference>
<dbReference type="PIRSF" id="PIRSF005461">
    <property type="entry name" value="23S_rRNA_mtase"/>
    <property type="match status" value="1"/>
</dbReference>
<dbReference type="SUPFAM" id="SSF53335">
    <property type="entry name" value="S-adenosyl-L-methionine-dependent methyltransferases"/>
    <property type="match status" value="1"/>
</dbReference>
<reference key="1">
    <citation type="journal article" date="2004" name="Nucleic Acids Res.">
        <title>Comparative analysis of the Borrelia garinii genome.</title>
        <authorList>
            <person name="Gloeckner G."/>
            <person name="Lehmann R."/>
            <person name="Romualdi A."/>
            <person name="Pradella S."/>
            <person name="Schulte-Spechtel U."/>
            <person name="Schilhabel M."/>
            <person name="Wilske B."/>
            <person name="Suehnel J."/>
            <person name="Platzer M."/>
        </authorList>
    </citation>
    <scope>NUCLEOTIDE SEQUENCE [LARGE SCALE GENOMIC DNA]</scope>
    <source>
        <strain>ATCC BAA-2496 / DSM 23469 / PBi</strain>
    </source>
</reference>
<feature type="chain" id="PRO_0000155476" description="Ribosomal RNA large subunit methyltransferase E">
    <location>
        <begin position="1"/>
        <end position="192"/>
    </location>
</feature>
<feature type="active site" description="Proton acceptor" evidence="1">
    <location>
        <position position="147"/>
    </location>
</feature>
<feature type="binding site" evidence="1">
    <location>
        <position position="48"/>
    </location>
    <ligand>
        <name>S-adenosyl-L-methionine</name>
        <dbReference type="ChEBI" id="CHEBI:59789"/>
    </ligand>
</feature>
<feature type="binding site" evidence="1">
    <location>
        <position position="50"/>
    </location>
    <ligand>
        <name>S-adenosyl-L-methionine</name>
        <dbReference type="ChEBI" id="CHEBI:59789"/>
    </ligand>
</feature>
<feature type="binding site" evidence="1">
    <location>
        <position position="67"/>
    </location>
    <ligand>
        <name>S-adenosyl-L-methionine</name>
        <dbReference type="ChEBI" id="CHEBI:59789"/>
    </ligand>
</feature>
<feature type="binding site" evidence="1">
    <location>
        <position position="85"/>
    </location>
    <ligand>
        <name>S-adenosyl-L-methionine</name>
        <dbReference type="ChEBI" id="CHEBI:59789"/>
    </ligand>
</feature>
<feature type="binding site" evidence="1">
    <location>
        <position position="107"/>
    </location>
    <ligand>
        <name>S-adenosyl-L-methionine</name>
        <dbReference type="ChEBI" id="CHEBI:59789"/>
    </ligand>
</feature>